<name>UVRB_STRPM</name>
<sequence>MIDKRDDKPFKLKSKYKPSGDQPQAIESLVDNIEGGEKAQILLGATGTGKTYTMSQVISKVNKPTLVIAHNKTLAGQLYGEFKEFFPDNAVEYFVSYYDYYQPEAYVPSSDTYIEKDSSVNDEIDKLRHSATSSLLERNDVIVVASVSCIYGLGSPKEYADSAVSLRPGQEISRDTLLNQLVDIQFERNDIDFQRGCFRVRGDVVEVFPASRDEHAFRVEFFGDEIDRICEIESLTGKTIGEVDHLVLFPATHFVTNDEHMEQSIAKIQAELAEQLQLFESEGKLLEAQRLRQRTEYDIEMLREMGYTSGVENYSRHMDGRSPGEPPYTLLDFFPEDFLIMIDESHMTMGQIKGMYNGDQARKQMLVDYGFRLPSALDNRPLRREEFESHVHQIIYVSATPGEYEMSQTNTIIEQIIRPTGLLDPEIDVRPSMGQMDDLLGEINQRVARDERTFITTLTKKMAEDLTDYLKEMGVKVKYMHSDIKTLERTEIIRDLRLGVFDVLIGINLLREGIDVPEVSLVAILDADKEGFLRNERGLIQTIGRAARNVDGHVIMYADKMTDSMQRAIDETARRREIQIAYNKAHGIVPQTIKKDIRGLISISKTSHNDISKEEMDYESMSRGERKEAINALQKQMQEAAELLDFELAAQMRDLILELKLMD</sequence>
<feature type="chain" id="PRO_0000227368" description="UvrABC system protein B">
    <location>
        <begin position="1"/>
        <end position="663"/>
    </location>
</feature>
<feature type="domain" description="Helicase ATP-binding" evidence="1">
    <location>
        <begin position="31"/>
        <end position="418"/>
    </location>
</feature>
<feature type="domain" description="Helicase C-terminal" evidence="1">
    <location>
        <begin position="435"/>
        <end position="601"/>
    </location>
</feature>
<feature type="domain" description="UVR" evidence="1">
    <location>
        <begin position="627"/>
        <end position="662"/>
    </location>
</feature>
<feature type="region of interest" description="Disordered" evidence="2">
    <location>
        <begin position="1"/>
        <end position="23"/>
    </location>
</feature>
<feature type="short sequence motif" description="Beta-hairpin">
    <location>
        <begin position="97"/>
        <end position="120"/>
    </location>
</feature>
<feature type="compositionally biased region" description="Basic and acidic residues" evidence="2">
    <location>
        <begin position="1"/>
        <end position="10"/>
    </location>
</feature>
<feature type="binding site" evidence="1">
    <location>
        <begin position="44"/>
        <end position="51"/>
    </location>
    <ligand>
        <name>ATP</name>
        <dbReference type="ChEBI" id="CHEBI:30616"/>
    </ligand>
</feature>
<dbReference type="EMBL" id="CP000056">
    <property type="protein sequence ID" value="AAX72169.1"/>
    <property type="molecule type" value="Genomic_DNA"/>
</dbReference>
<dbReference type="RefSeq" id="WP_011284900.1">
    <property type="nucleotide sequence ID" value="NC_007296.2"/>
</dbReference>
<dbReference type="SMR" id="Q48SZ1"/>
<dbReference type="KEGG" id="spb:M28_Spy1056"/>
<dbReference type="HOGENOM" id="CLU_009621_2_1_9"/>
<dbReference type="GO" id="GO:0005737">
    <property type="term" value="C:cytoplasm"/>
    <property type="evidence" value="ECO:0007669"/>
    <property type="project" value="UniProtKB-SubCell"/>
</dbReference>
<dbReference type="GO" id="GO:0009380">
    <property type="term" value="C:excinuclease repair complex"/>
    <property type="evidence" value="ECO:0007669"/>
    <property type="project" value="InterPro"/>
</dbReference>
<dbReference type="GO" id="GO:0005524">
    <property type="term" value="F:ATP binding"/>
    <property type="evidence" value="ECO:0007669"/>
    <property type="project" value="UniProtKB-UniRule"/>
</dbReference>
<dbReference type="GO" id="GO:0016887">
    <property type="term" value="F:ATP hydrolysis activity"/>
    <property type="evidence" value="ECO:0007669"/>
    <property type="project" value="InterPro"/>
</dbReference>
<dbReference type="GO" id="GO:0003677">
    <property type="term" value="F:DNA binding"/>
    <property type="evidence" value="ECO:0007669"/>
    <property type="project" value="UniProtKB-UniRule"/>
</dbReference>
<dbReference type="GO" id="GO:0009381">
    <property type="term" value="F:excinuclease ABC activity"/>
    <property type="evidence" value="ECO:0007669"/>
    <property type="project" value="UniProtKB-UniRule"/>
</dbReference>
<dbReference type="GO" id="GO:0006289">
    <property type="term" value="P:nucleotide-excision repair"/>
    <property type="evidence" value="ECO:0007669"/>
    <property type="project" value="UniProtKB-UniRule"/>
</dbReference>
<dbReference type="GO" id="GO:0009432">
    <property type="term" value="P:SOS response"/>
    <property type="evidence" value="ECO:0007669"/>
    <property type="project" value="UniProtKB-UniRule"/>
</dbReference>
<dbReference type="CDD" id="cd17916">
    <property type="entry name" value="DEXHc_UvrB"/>
    <property type="match status" value="1"/>
</dbReference>
<dbReference type="CDD" id="cd18790">
    <property type="entry name" value="SF2_C_UvrB"/>
    <property type="match status" value="1"/>
</dbReference>
<dbReference type="Gene3D" id="3.40.50.300">
    <property type="entry name" value="P-loop containing nucleotide triphosphate hydrolases"/>
    <property type="match status" value="3"/>
</dbReference>
<dbReference type="Gene3D" id="4.10.860.10">
    <property type="entry name" value="UVR domain"/>
    <property type="match status" value="1"/>
</dbReference>
<dbReference type="HAMAP" id="MF_00204">
    <property type="entry name" value="UvrB"/>
    <property type="match status" value="1"/>
</dbReference>
<dbReference type="InterPro" id="IPR006935">
    <property type="entry name" value="Helicase/UvrB_N"/>
</dbReference>
<dbReference type="InterPro" id="IPR014001">
    <property type="entry name" value="Helicase_ATP-bd"/>
</dbReference>
<dbReference type="InterPro" id="IPR001650">
    <property type="entry name" value="Helicase_C-like"/>
</dbReference>
<dbReference type="InterPro" id="IPR027417">
    <property type="entry name" value="P-loop_NTPase"/>
</dbReference>
<dbReference type="InterPro" id="IPR001943">
    <property type="entry name" value="UVR_dom"/>
</dbReference>
<dbReference type="InterPro" id="IPR036876">
    <property type="entry name" value="UVR_dom_sf"/>
</dbReference>
<dbReference type="InterPro" id="IPR004807">
    <property type="entry name" value="UvrB"/>
</dbReference>
<dbReference type="InterPro" id="IPR041471">
    <property type="entry name" value="UvrB_inter"/>
</dbReference>
<dbReference type="InterPro" id="IPR024759">
    <property type="entry name" value="UvrB_YAD/RRR_dom"/>
</dbReference>
<dbReference type="NCBIfam" id="NF003673">
    <property type="entry name" value="PRK05298.1"/>
    <property type="match status" value="1"/>
</dbReference>
<dbReference type="NCBIfam" id="TIGR00631">
    <property type="entry name" value="uvrb"/>
    <property type="match status" value="1"/>
</dbReference>
<dbReference type="PANTHER" id="PTHR24029">
    <property type="entry name" value="UVRABC SYSTEM PROTEIN B"/>
    <property type="match status" value="1"/>
</dbReference>
<dbReference type="PANTHER" id="PTHR24029:SF0">
    <property type="entry name" value="UVRABC SYSTEM PROTEIN B"/>
    <property type="match status" value="1"/>
</dbReference>
<dbReference type="Pfam" id="PF00271">
    <property type="entry name" value="Helicase_C"/>
    <property type="match status" value="1"/>
</dbReference>
<dbReference type="Pfam" id="PF04851">
    <property type="entry name" value="ResIII"/>
    <property type="match status" value="1"/>
</dbReference>
<dbReference type="Pfam" id="PF02151">
    <property type="entry name" value="UVR"/>
    <property type="match status" value="1"/>
</dbReference>
<dbReference type="Pfam" id="PF12344">
    <property type="entry name" value="UvrB"/>
    <property type="match status" value="1"/>
</dbReference>
<dbReference type="Pfam" id="PF17757">
    <property type="entry name" value="UvrB_inter"/>
    <property type="match status" value="1"/>
</dbReference>
<dbReference type="SMART" id="SM00487">
    <property type="entry name" value="DEXDc"/>
    <property type="match status" value="1"/>
</dbReference>
<dbReference type="SMART" id="SM00490">
    <property type="entry name" value="HELICc"/>
    <property type="match status" value="1"/>
</dbReference>
<dbReference type="SUPFAM" id="SSF46600">
    <property type="entry name" value="C-terminal UvrC-binding domain of UvrB"/>
    <property type="match status" value="1"/>
</dbReference>
<dbReference type="SUPFAM" id="SSF52540">
    <property type="entry name" value="P-loop containing nucleoside triphosphate hydrolases"/>
    <property type="match status" value="2"/>
</dbReference>
<dbReference type="PROSITE" id="PS51192">
    <property type="entry name" value="HELICASE_ATP_BIND_1"/>
    <property type="match status" value="1"/>
</dbReference>
<dbReference type="PROSITE" id="PS51194">
    <property type="entry name" value="HELICASE_CTER"/>
    <property type="match status" value="1"/>
</dbReference>
<dbReference type="PROSITE" id="PS50151">
    <property type="entry name" value="UVR"/>
    <property type="match status" value="1"/>
</dbReference>
<keyword id="KW-0067">ATP-binding</keyword>
<keyword id="KW-0963">Cytoplasm</keyword>
<keyword id="KW-0227">DNA damage</keyword>
<keyword id="KW-0228">DNA excision</keyword>
<keyword id="KW-0234">DNA repair</keyword>
<keyword id="KW-0267">Excision nuclease</keyword>
<keyword id="KW-0547">Nucleotide-binding</keyword>
<keyword id="KW-0742">SOS response</keyword>
<organism>
    <name type="scientific">Streptococcus pyogenes serotype M28 (strain MGAS6180)</name>
    <dbReference type="NCBI Taxonomy" id="319701"/>
    <lineage>
        <taxon>Bacteria</taxon>
        <taxon>Bacillati</taxon>
        <taxon>Bacillota</taxon>
        <taxon>Bacilli</taxon>
        <taxon>Lactobacillales</taxon>
        <taxon>Streptococcaceae</taxon>
        <taxon>Streptococcus</taxon>
    </lineage>
</organism>
<comment type="function">
    <text evidence="1">The UvrABC repair system catalyzes the recognition and processing of DNA lesions. A damage recognition complex composed of 2 UvrA and 2 UvrB subunits scans DNA for abnormalities. Upon binding of the UvrA(2)B(2) complex to a putative damaged site, the DNA wraps around one UvrB monomer. DNA wrap is dependent on ATP binding by UvrB and probably causes local melting of the DNA helix, facilitating insertion of UvrB beta-hairpin between the DNA strands. Then UvrB probes one DNA strand for the presence of a lesion. If a lesion is found the UvrA subunits dissociate and the UvrB-DNA preincision complex is formed. This complex is subsequently bound by UvrC and the second UvrB is released. If no lesion is found, the DNA wraps around the other UvrB subunit that will check the other stand for damage.</text>
</comment>
<comment type="subunit">
    <text evidence="1">Forms a heterotetramer with UvrA during the search for lesions. Interacts with UvrC in an incision complex.</text>
</comment>
<comment type="subcellular location">
    <subcellularLocation>
        <location evidence="1">Cytoplasm</location>
    </subcellularLocation>
</comment>
<comment type="domain">
    <text evidence="1">The beta-hairpin motif is involved in DNA binding.</text>
</comment>
<comment type="similarity">
    <text evidence="1">Belongs to the UvrB family.</text>
</comment>
<accession>Q48SZ1</accession>
<gene>
    <name evidence="1" type="primary">uvrB</name>
    <name type="ordered locus">M28_Spy1056</name>
</gene>
<proteinExistence type="inferred from homology"/>
<reference key="1">
    <citation type="journal article" date="2005" name="J. Infect. Dis.">
        <title>Genome sequence of a serotype M28 strain of group A Streptococcus: potential new insights into puerperal sepsis and bacterial disease specificity.</title>
        <authorList>
            <person name="Green N.M."/>
            <person name="Zhang S."/>
            <person name="Porcella S.F."/>
            <person name="Nagiec M.J."/>
            <person name="Barbian K.D."/>
            <person name="Beres S.B."/>
            <person name="Lefebvre R.B."/>
            <person name="Musser J.M."/>
        </authorList>
    </citation>
    <scope>NUCLEOTIDE SEQUENCE [LARGE SCALE GENOMIC DNA]</scope>
    <source>
        <strain>MGAS6180</strain>
    </source>
</reference>
<evidence type="ECO:0000255" key="1">
    <source>
        <dbReference type="HAMAP-Rule" id="MF_00204"/>
    </source>
</evidence>
<evidence type="ECO:0000256" key="2">
    <source>
        <dbReference type="SAM" id="MobiDB-lite"/>
    </source>
</evidence>
<protein>
    <recommendedName>
        <fullName evidence="1">UvrABC system protein B</fullName>
        <shortName evidence="1">Protein UvrB</shortName>
    </recommendedName>
    <alternativeName>
        <fullName evidence="1">Excinuclease ABC subunit B</fullName>
    </alternativeName>
</protein>